<gene>
    <name type="primary">Armcx3</name>
</gene>
<reference key="1">
    <citation type="journal article" date="2004" name="Genome Res.">
        <title>The status, quality, and expansion of the NIH full-length cDNA project: the Mammalian Gene Collection (MGC).</title>
        <authorList>
            <consortium name="The MGC Project Team"/>
        </authorList>
    </citation>
    <scope>NUCLEOTIDE SEQUENCE [LARGE SCALE MRNA]</scope>
    <source>
        <tissue>Heart</tissue>
    </source>
</reference>
<reference key="2">
    <citation type="journal article" date="2012" name="Nat. Commun.">
        <title>Quantitative maps of protein phosphorylation sites across 14 different rat organs and tissues.</title>
        <authorList>
            <person name="Lundby A."/>
            <person name="Secher A."/>
            <person name="Lage K."/>
            <person name="Nordsborg N.B."/>
            <person name="Dmytriyev A."/>
            <person name="Lundby C."/>
            <person name="Olsen J.V."/>
        </authorList>
    </citation>
    <scope>PHOSPHORYLATION [LARGE SCALE ANALYSIS] AT SER-61 AND SER-67</scope>
    <scope>IDENTIFICATION BY MASS SPECTROMETRY [LARGE SCALE ANALYSIS]</scope>
</reference>
<dbReference type="EMBL" id="BC083747">
    <property type="protein sequence ID" value="AAH83747.1"/>
    <property type="molecule type" value="mRNA"/>
</dbReference>
<dbReference type="RefSeq" id="NP_001014295.1">
    <property type="nucleotide sequence ID" value="NM_001014273.1"/>
</dbReference>
<dbReference type="SMR" id="Q5XID7"/>
<dbReference type="BioGRID" id="266720">
    <property type="interactions" value="1"/>
</dbReference>
<dbReference type="FunCoup" id="Q5XID7">
    <property type="interactions" value="1590"/>
</dbReference>
<dbReference type="STRING" id="10116.ENSRNOP00000075527"/>
<dbReference type="iPTMnet" id="Q5XID7"/>
<dbReference type="PhosphoSitePlus" id="Q5XID7"/>
<dbReference type="PaxDb" id="10116-ENSRNOP00000033859"/>
<dbReference type="Ensembl" id="ENSRNOT00000029664.6">
    <property type="protein sequence ID" value="ENSRNOP00000033859.4"/>
    <property type="gene ID" value="ENSRNOG00000025730.7"/>
</dbReference>
<dbReference type="Ensembl" id="ENSRNOT00000088760.2">
    <property type="protein sequence ID" value="ENSRNOP00000075527.2"/>
    <property type="gene ID" value="ENSRNOG00000025730.7"/>
</dbReference>
<dbReference type="Ensembl" id="ENSRNOT00000114177.1">
    <property type="protein sequence ID" value="ENSRNOP00000086605.1"/>
    <property type="gene ID" value="ENSRNOG00000025730.7"/>
</dbReference>
<dbReference type="Ensembl" id="ENSRNOT00000114255.1">
    <property type="protein sequence ID" value="ENSRNOP00000086584.1"/>
    <property type="gene ID" value="ENSRNOG00000025730.7"/>
</dbReference>
<dbReference type="GeneID" id="367902"/>
<dbReference type="KEGG" id="rno:367902"/>
<dbReference type="UCSC" id="RGD:1549739">
    <property type="organism name" value="rat"/>
</dbReference>
<dbReference type="AGR" id="RGD:1549739"/>
<dbReference type="CTD" id="51566"/>
<dbReference type="RGD" id="1549739">
    <property type="gene designation" value="Armcx3"/>
</dbReference>
<dbReference type="eggNOG" id="ENOG502TCDI">
    <property type="taxonomic scope" value="Eukaryota"/>
</dbReference>
<dbReference type="GeneTree" id="ENSGT00940000162753"/>
<dbReference type="HOGENOM" id="CLU_037187_0_0_1"/>
<dbReference type="InParanoid" id="Q5XID7"/>
<dbReference type="OMA" id="DSKSIVW"/>
<dbReference type="OrthoDB" id="10017790at2759"/>
<dbReference type="PhylomeDB" id="Q5XID7"/>
<dbReference type="TreeFam" id="TF335652"/>
<dbReference type="Reactome" id="R-RNO-9013404">
    <property type="pathway name" value="RAC2 GTPase cycle"/>
</dbReference>
<dbReference type="PRO" id="PR:Q5XID7"/>
<dbReference type="Proteomes" id="UP000002494">
    <property type="component" value="Chromosome X"/>
</dbReference>
<dbReference type="Bgee" id="ENSRNOG00000025730">
    <property type="expression patterns" value="Expressed in cerebellum and 20 other cell types or tissues"/>
</dbReference>
<dbReference type="ExpressionAtlas" id="Q5XID7">
    <property type="expression patterns" value="baseline and differential"/>
</dbReference>
<dbReference type="GO" id="GO:1904115">
    <property type="term" value="C:axon cytoplasm"/>
    <property type="evidence" value="ECO:0007669"/>
    <property type="project" value="GOC"/>
</dbReference>
<dbReference type="GO" id="GO:0005829">
    <property type="term" value="C:cytosol"/>
    <property type="evidence" value="ECO:0000266"/>
    <property type="project" value="RGD"/>
</dbReference>
<dbReference type="GO" id="GO:0005741">
    <property type="term" value="C:mitochondrial outer membrane"/>
    <property type="evidence" value="ECO:0000266"/>
    <property type="project" value="RGD"/>
</dbReference>
<dbReference type="GO" id="GO:0005739">
    <property type="term" value="C:mitochondrion"/>
    <property type="evidence" value="ECO:0000266"/>
    <property type="project" value="RGD"/>
</dbReference>
<dbReference type="GO" id="GO:0005634">
    <property type="term" value="C:nucleus"/>
    <property type="evidence" value="ECO:0000266"/>
    <property type="project" value="RGD"/>
</dbReference>
<dbReference type="GO" id="GO:0019896">
    <property type="term" value="P:axonal transport of mitochondrion"/>
    <property type="evidence" value="ECO:0000266"/>
    <property type="project" value="RGD"/>
</dbReference>
<dbReference type="GO" id="GO:0007005">
    <property type="term" value="P:mitochondrion organization"/>
    <property type="evidence" value="ECO:0000266"/>
    <property type="project" value="RGD"/>
</dbReference>
<dbReference type="GO" id="GO:0045944">
    <property type="term" value="P:positive regulation of transcription by RNA polymerase II"/>
    <property type="evidence" value="ECO:0000266"/>
    <property type="project" value="RGD"/>
</dbReference>
<dbReference type="GO" id="GO:0008104">
    <property type="term" value="P:protein localization"/>
    <property type="evidence" value="ECO:0000266"/>
    <property type="project" value="RGD"/>
</dbReference>
<dbReference type="FunFam" id="1.25.10.10:FF:000846">
    <property type="entry name" value="Armadillo repeat-containing X-linked protein 3"/>
    <property type="match status" value="1"/>
</dbReference>
<dbReference type="Gene3D" id="1.25.10.10">
    <property type="entry name" value="Leucine-rich Repeat Variant"/>
    <property type="match status" value="2"/>
</dbReference>
<dbReference type="InterPro" id="IPR011989">
    <property type="entry name" value="ARM-like"/>
</dbReference>
<dbReference type="InterPro" id="IPR006911">
    <property type="entry name" value="ARM-rpt_dom"/>
</dbReference>
<dbReference type="InterPro" id="IPR016024">
    <property type="entry name" value="ARM-type_fold"/>
</dbReference>
<dbReference type="InterPro" id="IPR000225">
    <property type="entry name" value="Armadillo"/>
</dbReference>
<dbReference type="InterPro" id="IPR051303">
    <property type="entry name" value="Armcx_regulator"/>
</dbReference>
<dbReference type="PANTHER" id="PTHR15712">
    <property type="entry name" value="ARMADILLO REPEAT CONTAINING PROTEIN"/>
    <property type="match status" value="1"/>
</dbReference>
<dbReference type="PANTHER" id="PTHR15712:SF8">
    <property type="entry name" value="ARMADILLO REPEAT-CONTAINING X-LINKED PROTEIN 3"/>
    <property type="match status" value="1"/>
</dbReference>
<dbReference type="Pfam" id="PF04826">
    <property type="entry name" value="Arm_2"/>
    <property type="match status" value="1"/>
</dbReference>
<dbReference type="SUPFAM" id="SSF48371">
    <property type="entry name" value="ARM repeat"/>
    <property type="match status" value="1"/>
</dbReference>
<dbReference type="PROSITE" id="PS50176">
    <property type="entry name" value="ARM_REPEAT"/>
    <property type="match status" value="1"/>
</dbReference>
<name>ARMX3_RAT</name>
<accession>Q5XID7</accession>
<evidence type="ECO:0000250" key="1">
    <source>
        <dbReference type="UniProtKB" id="Q8BHS6"/>
    </source>
</evidence>
<evidence type="ECO:0000250" key="2">
    <source>
        <dbReference type="UniProtKB" id="Q9UH62"/>
    </source>
</evidence>
<evidence type="ECO:0000255" key="3"/>
<evidence type="ECO:0000256" key="4">
    <source>
        <dbReference type="SAM" id="MobiDB-lite"/>
    </source>
</evidence>
<evidence type="ECO:0000305" key="5"/>
<evidence type="ECO:0007744" key="6">
    <source>
    </source>
</evidence>
<proteinExistence type="evidence at protein level"/>
<protein>
    <recommendedName>
        <fullName>Armadillo repeat-containing X-linked protein 3</fullName>
    </recommendedName>
</protein>
<comment type="function">
    <text evidence="1">Regulates mitochondrial aggregation and transport in axons in living neurons. May link mitochondria to the Trak2-kinesin motor complex via its interaction with Miro and Trak2. Mitochondrial distribution and dynamics is regulated through Armcx3 protein degradation, which is promoted by PCK and negatively regulated by Wnt1. Enhances the Sox10-mediated transactivation of the neuronal acetylcholine receptor subunit alpha-3 and beta-4 subunit gene promoters.</text>
</comment>
<comment type="subunit">
    <text evidence="1">Interacts (via ARM domain) with MIRO1, MIRO2 and TRAK2. The interaction with Miro is calcium-dependent. Interacts with Sox10.</text>
</comment>
<comment type="subcellular location">
    <subcellularLocation>
        <location evidence="1">Mitochondrion outer membrane</location>
        <topology evidence="3">Single-pass membrane protein</topology>
    </subcellularLocation>
    <subcellularLocation>
        <location evidence="1">Cytoplasm</location>
    </subcellularLocation>
    <subcellularLocation>
        <location evidence="1">Nucleus</location>
    </subcellularLocation>
</comment>
<comment type="similarity">
    <text evidence="5">Belongs to the eutherian X-chromosome-specific Armcx family.</text>
</comment>
<feature type="chain" id="PRO_0000191369" description="Armadillo repeat-containing X-linked protein 3">
    <location>
        <begin position="1"/>
        <end position="379"/>
    </location>
</feature>
<feature type="topological domain" description="Mitochondrial intermembrane" evidence="1">
    <location>
        <begin position="1"/>
        <end position="6"/>
    </location>
</feature>
<feature type="transmembrane region" description="Helical; Signal-anchor" evidence="3">
    <location>
        <begin position="7"/>
        <end position="29"/>
    </location>
</feature>
<feature type="topological domain" description="Cytoplasmic" evidence="1">
    <location>
        <begin position="30"/>
        <end position="379"/>
    </location>
</feature>
<feature type="repeat" description="ARM 1" evidence="3">
    <location>
        <begin position="111"/>
        <end position="151"/>
    </location>
</feature>
<feature type="repeat" description="ARM 2" evidence="3">
    <location>
        <begin position="153"/>
        <end position="192"/>
    </location>
</feature>
<feature type="repeat" description="ARM 3" evidence="3">
    <location>
        <begin position="233"/>
        <end position="272"/>
    </location>
</feature>
<feature type="region of interest" description="Mitochondrion outer membrane (MOM)-targeting sequence" evidence="5">
    <location>
        <begin position="1"/>
        <end position="6"/>
    </location>
</feature>
<feature type="region of interest" description="Mitochondrion outer membrane (MOM)-targeting sequence" evidence="5">
    <location>
        <begin position="26"/>
        <end position="37"/>
    </location>
</feature>
<feature type="region of interest" description="Disordered" evidence="4">
    <location>
        <begin position="34"/>
        <end position="69"/>
    </location>
</feature>
<feature type="region of interest" description="Nuclear localization signal" evidence="1">
    <location>
        <begin position="89"/>
        <end position="98"/>
    </location>
</feature>
<feature type="modified residue" description="Phosphoserine" evidence="6">
    <location>
        <position position="61"/>
    </location>
</feature>
<feature type="modified residue" description="Phosphoserine" evidence="6">
    <location>
        <position position="67"/>
    </location>
</feature>
<feature type="modified residue" description="Phosphoserine" evidence="2">
    <location>
        <position position="72"/>
    </location>
</feature>
<feature type="modified residue" description="Phosphoserine" evidence="2">
    <location>
        <position position="110"/>
    </location>
</feature>
<keyword id="KW-0963">Cytoplasm</keyword>
<keyword id="KW-0472">Membrane</keyword>
<keyword id="KW-0496">Mitochondrion</keyword>
<keyword id="KW-1000">Mitochondrion outer membrane</keyword>
<keyword id="KW-0539">Nucleus</keyword>
<keyword id="KW-0597">Phosphoprotein</keyword>
<keyword id="KW-1185">Reference proteome</keyword>
<keyword id="KW-0677">Repeat</keyword>
<keyword id="KW-0735">Signal-anchor</keyword>
<keyword id="KW-0812">Transmembrane</keyword>
<keyword id="KW-1133">Transmembrane helix</keyword>
<sequence>MGYARKVGWVTAGLVIGAGACYCIYRLTRGRKQNKEKMAEGGPGDVEDAGDCSGARYNDWSDDDDDSNESKSIVWYPPWARIGTEAGTRARARARARATRARRAVQKRASPNSDDTVLSPQELQKVLCLVEMSEKPYILEAALIALGNNAAYAFNRDIIRDLGGLPIVAKILNTRDPIVKEKALIVLNNLSVNAENQRRLKIYMNQVCDDTVTSRLNSSVQLAGLRLLTNMTVTNEYQHILANSISDFFRLFSAGNEETKLQVLKLLLNLAENPAMTRELLGAHVPSSLGSLFNKKEYKEVILKLLSIFENINDNFKWEENEPAQNHFSEGSLFFFLKEFQVCADKVLGIESHHDFQVRVKVGKFVTKLTERMFPKSQE</sequence>
<organism>
    <name type="scientific">Rattus norvegicus</name>
    <name type="common">Rat</name>
    <dbReference type="NCBI Taxonomy" id="10116"/>
    <lineage>
        <taxon>Eukaryota</taxon>
        <taxon>Metazoa</taxon>
        <taxon>Chordata</taxon>
        <taxon>Craniata</taxon>
        <taxon>Vertebrata</taxon>
        <taxon>Euteleostomi</taxon>
        <taxon>Mammalia</taxon>
        <taxon>Eutheria</taxon>
        <taxon>Euarchontoglires</taxon>
        <taxon>Glires</taxon>
        <taxon>Rodentia</taxon>
        <taxon>Myomorpha</taxon>
        <taxon>Muroidea</taxon>
        <taxon>Muridae</taxon>
        <taxon>Murinae</taxon>
        <taxon>Rattus</taxon>
    </lineage>
</organism>